<evidence type="ECO:0000250" key="1">
    <source>
        <dbReference type="UniProtKB" id="D4AV38"/>
    </source>
</evidence>
<evidence type="ECO:0000250" key="2">
    <source>
        <dbReference type="UniProtKB" id="L0TC47"/>
    </source>
</evidence>
<evidence type="ECO:0000255" key="3"/>
<evidence type="ECO:0000255" key="4">
    <source>
        <dbReference type="PROSITE-ProRule" id="PRU00498"/>
    </source>
</evidence>
<evidence type="ECO:0000269" key="5">
    <source>
    </source>
</evidence>
<evidence type="ECO:0000269" key="6">
    <source>
    </source>
</evidence>
<evidence type="ECO:0000303" key="7">
    <source>
    </source>
</evidence>
<evidence type="ECO:0000305" key="8"/>
<evidence type="ECO:0000305" key="9">
    <source>
    </source>
</evidence>
<organism>
    <name type="scientific">Fungal sp. (strain ATCC 74256)</name>
    <dbReference type="NCBI Taxonomy" id="1729595"/>
    <lineage>
        <taxon>Eukaryota</taxon>
        <taxon>Fungi</taxon>
    </lineage>
</organism>
<gene>
    <name evidence="7" type="primary">phiG</name>
</gene>
<dbReference type="EC" id="3.1.1.1" evidence="2"/>
<dbReference type="EMBL" id="LC086931">
    <property type="protein sequence ID" value="BBG28504.1"/>
    <property type="molecule type" value="Genomic_DNA"/>
</dbReference>
<dbReference type="SMR" id="A0A348HAY2"/>
<dbReference type="GO" id="GO:0005576">
    <property type="term" value="C:extracellular region"/>
    <property type="evidence" value="ECO:0007669"/>
    <property type="project" value="UniProtKB-SubCell"/>
</dbReference>
<dbReference type="GO" id="GO:0052689">
    <property type="term" value="F:carboxylic ester hydrolase activity"/>
    <property type="evidence" value="ECO:0007669"/>
    <property type="project" value="UniProtKB-KW"/>
</dbReference>
<dbReference type="GO" id="GO:0016042">
    <property type="term" value="P:lipid catabolic process"/>
    <property type="evidence" value="ECO:0007669"/>
    <property type="project" value="UniProtKB-KW"/>
</dbReference>
<dbReference type="CDD" id="cd12809">
    <property type="entry name" value="Esterase_713_like-2"/>
    <property type="match status" value="1"/>
</dbReference>
<dbReference type="Gene3D" id="3.40.50.1820">
    <property type="entry name" value="alpha/beta hydrolase"/>
    <property type="match status" value="1"/>
</dbReference>
<dbReference type="InterPro" id="IPR000073">
    <property type="entry name" value="AB_hydrolase_1"/>
</dbReference>
<dbReference type="InterPro" id="IPR029058">
    <property type="entry name" value="AB_hydrolase_fold"/>
</dbReference>
<dbReference type="InterPro" id="IPR050228">
    <property type="entry name" value="Carboxylesterase_BioH"/>
</dbReference>
<dbReference type="PANTHER" id="PTHR43194:SF4">
    <property type="entry name" value="AB HYDROLASE-1 DOMAIN-CONTAINING PROTEIN"/>
    <property type="match status" value="1"/>
</dbReference>
<dbReference type="PANTHER" id="PTHR43194">
    <property type="entry name" value="HYDROLASE ALPHA/BETA FOLD FAMILY"/>
    <property type="match status" value="1"/>
</dbReference>
<dbReference type="Pfam" id="PF12697">
    <property type="entry name" value="Abhydrolase_6"/>
    <property type="match status" value="1"/>
</dbReference>
<dbReference type="SUPFAM" id="SSF53474">
    <property type="entry name" value="alpha/beta-Hydrolases"/>
    <property type="match status" value="1"/>
</dbReference>
<comment type="function">
    <text evidence="5 8 9">Part of the gene cluster that mediates the biosynthesis of the antihypercholesterolemic agents phomoidrides which are dimeric anhydrides (PubMed:26558485). The function of phiG within the pathway has still to be determined (Probable). The pathway begins with the highly reducing polyketide synthase phiA that catalyzes the formation of a C12-fatty acyl-ACP, starting from one acetate and 5 malonate units. The hydrolase phiM is involved in the release of the C12-fatty acyl chain from phiA. The alkylcitrate synthase (ACS) phiJ and the alkylcitrate dehydratase (ACDH) phiI then give rise to decarboxylated monomeric anhydrides by coupling the C12-fatty acyl chain with oxalacetic acid. The cyclase phiC is responsible for the dimerization of the monomeric anhydrides which leads to the production of prephomoidride that contains the characteristic bicyclo[4.3.1]deca-1,6-diene system of phomoidrides. Iterative oxidation catalyzed by the alpha-ketoglutarate-dependent dioxygenase phiK produced then phomoidride A. Finally, the methyltransferase phiE converts phomoidride A to phomoidride B via an acetalization reaction. The phosphatidylethanolamine-binding protein phiB and phiN are not essential for dimerization and their functions have still to be determined (Probable).</text>
</comment>
<comment type="catalytic activity">
    <reaction evidence="2">
        <text>a carboxylic ester + H2O = an alcohol + a carboxylate + H(+)</text>
        <dbReference type="Rhea" id="RHEA:21164"/>
        <dbReference type="ChEBI" id="CHEBI:15377"/>
        <dbReference type="ChEBI" id="CHEBI:15378"/>
        <dbReference type="ChEBI" id="CHEBI:29067"/>
        <dbReference type="ChEBI" id="CHEBI:30879"/>
        <dbReference type="ChEBI" id="CHEBI:33308"/>
        <dbReference type="EC" id="3.1.1.1"/>
    </reaction>
</comment>
<comment type="subcellular location">
    <subcellularLocation>
        <location evidence="1">Secreted</location>
    </subcellularLocation>
</comment>
<comment type="biotechnology">
    <text evidence="6">Phomoidrides A and B (also known as CP-225,917 and CP-263,114) are potent inhibitors of Ras farnesyltransferase and squalene synthase (PubMed:9066758). CP-225,917 and CP-263,114 inhibit Ras farnesyl transferase from rat brain with IC(50) values of 6 uM and 20 uoM, respectively (PubMed:9066758). CP-225,917 inhibits squalene synthase with an IC(50) value of 43 uM and CP-263,114 with an IC(50) of 160 uM (PubMed:9066758).</text>
</comment>
<comment type="similarity">
    <text evidence="8">Belongs to the AB hydrolase superfamily.</text>
</comment>
<reference key="1">
    <citation type="journal article" date="2015" name="Org. Lett.">
        <title>Biosynthetic study on antihypercholesterolemic agent phomoidride: general biogenesis of fungal dimeric anhydrides.</title>
        <authorList>
            <person name="Fujii R."/>
            <person name="Matsu Y."/>
            <person name="Minami A."/>
            <person name="Nagamine S."/>
            <person name="Takeuchi I."/>
            <person name="Gomi K."/>
            <person name="Oikawa H."/>
        </authorList>
    </citation>
    <scope>NUCLEOTIDE SEQUENCE [GENOMIC DNA]</scope>
    <scope>FUNCTION</scope>
    <source>
        <strain>ATCC 74256</strain>
    </source>
</reference>
<reference key="2">
    <citation type="journal article" date="1997" name="J. Antibiot.">
        <title>CP-225,917 and CP-263,114, novel Ras farnesylation inhibitors from an unidentified fungus. I. Taxonomy, fermentation, isolation, and biochemical properties.</title>
        <authorList>
            <person name="Dabrah T.T."/>
            <person name="Harwood H.J. Jr."/>
            <person name="Huang L.H."/>
            <person name="Jankovich N.D."/>
            <person name="Kaneko T."/>
            <person name="Li J.C."/>
            <person name="Lindsey S."/>
            <person name="Moshier P.M."/>
            <person name="Subashi T.A."/>
            <person name="Therrien M."/>
            <person name="Watts P.C."/>
        </authorList>
    </citation>
    <scope>BIOTECHNOLOGY</scope>
</reference>
<name>PHIG_FUNX7</name>
<keyword id="KW-0325">Glycoprotein</keyword>
<keyword id="KW-0378">Hydrolase</keyword>
<keyword id="KW-0442">Lipid degradation</keyword>
<keyword id="KW-0443">Lipid metabolism</keyword>
<keyword id="KW-0964">Secreted</keyword>
<keyword id="KW-0719">Serine esterase</keyword>
<keyword id="KW-0732">Signal</keyword>
<proteinExistence type="evidence at protein level"/>
<protein>
    <recommendedName>
        <fullName evidence="7">Probable secreted lipase phiG</fullName>
        <ecNumber evidence="2">3.1.1.1</ecNumber>
    </recommendedName>
    <alternativeName>
        <fullName evidence="7">Phomoidride biosynthesis cluster protein G</fullName>
    </alternativeName>
</protein>
<feature type="signal peptide" evidence="3">
    <location>
        <begin position="1"/>
        <end position="18"/>
    </location>
</feature>
<feature type="chain" id="PRO_5016591517" description="Probable secreted lipase phiG">
    <location>
        <begin position="19"/>
        <end position="364"/>
    </location>
</feature>
<feature type="active site" description="Nucleophile" evidence="2">
    <location>
        <position position="203"/>
    </location>
</feature>
<feature type="glycosylation site" description="N-linked (GlcNAc...) asparagine" evidence="4">
    <location>
        <position position="49"/>
    </location>
</feature>
<feature type="glycosylation site" description="N-linked (GlcNAc...) asparagine" evidence="4">
    <location>
        <position position="262"/>
    </location>
</feature>
<sequence>MMPFMDLILSILVSSVLLLNCKSSFHESPRRDAGSEVTSFFYVGGKYENFTIYVEEYVPQNPTQPYPIIFIAGAGQTGTNWLTTPDGRPGWASFFLDHGYTVYLTDQTSRGRSPWYPGIGFMVASGTSDIETLFTSTSHNLWPQAHLHTQWPGTGKVGDPTFDAFYAAQVQLQADQPISEESNTKAHSALLDRIGPAYVLTHSQAGSYGWRIGDARPNLVKGIVALEPAGPPFDQKYPYTGRARPWGITIGEIEYEPSAGPNATDLDTVIIPAKDQDHTECVLQSEPPKLLKNLQAIPALVVGAEASFHAPYEYCTAEYLKQAGVDVEFADLGEQGIKGNGHMMFMEKNNLEIAEVVLTWIQKQ</sequence>
<accession>A0A348HAY2</accession>